<proteinExistence type="inferred from homology"/>
<accession>Q6CZK3</accession>
<name>GLGA_PECAS</name>
<dbReference type="EC" id="2.4.1.21" evidence="1"/>
<dbReference type="EMBL" id="BX950851">
    <property type="protein sequence ID" value="CAG77045.1"/>
    <property type="molecule type" value="Genomic_DNA"/>
</dbReference>
<dbReference type="RefSeq" id="WP_011095619.1">
    <property type="nucleotide sequence ID" value="NC_004547.2"/>
</dbReference>
<dbReference type="SMR" id="Q6CZK3"/>
<dbReference type="STRING" id="218491.ECA4148"/>
<dbReference type="CAZy" id="GT5">
    <property type="family name" value="Glycosyltransferase Family 5"/>
</dbReference>
<dbReference type="GeneID" id="57210811"/>
<dbReference type="KEGG" id="eca:ECA4148"/>
<dbReference type="PATRIC" id="fig|218491.5.peg.4221"/>
<dbReference type="eggNOG" id="COG0297">
    <property type="taxonomic scope" value="Bacteria"/>
</dbReference>
<dbReference type="HOGENOM" id="CLU_009583_18_2_6"/>
<dbReference type="OrthoDB" id="9808590at2"/>
<dbReference type="UniPathway" id="UPA00164"/>
<dbReference type="Proteomes" id="UP000007966">
    <property type="component" value="Chromosome"/>
</dbReference>
<dbReference type="GO" id="GO:0005829">
    <property type="term" value="C:cytosol"/>
    <property type="evidence" value="ECO:0007669"/>
    <property type="project" value="TreeGrafter"/>
</dbReference>
<dbReference type="GO" id="GO:0009011">
    <property type="term" value="F:alpha-1,4-glucan glucosyltransferase (ADP-glucose donor) activity"/>
    <property type="evidence" value="ECO:0007669"/>
    <property type="project" value="UniProtKB-UniRule"/>
</dbReference>
<dbReference type="GO" id="GO:0004373">
    <property type="term" value="F:alpha-1,4-glucan glucosyltransferase (UDP-glucose donor) activity"/>
    <property type="evidence" value="ECO:0007669"/>
    <property type="project" value="InterPro"/>
</dbReference>
<dbReference type="GO" id="GO:0005978">
    <property type="term" value="P:glycogen biosynthetic process"/>
    <property type="evidence" value="ECO:0007669"/>
    <property type="project" value="UniProtKB-UniRule"/>
</dbReference>
<dbReference type="CDD" id="cd03791">
    <property type="entry name" value="GT5_Glycogen_synthase_DULL1-like"/>
    <property type="match status" value="1"/>
</dbReference>
<dbReference type="FunFam" id="3.40.50.2000:FF:000008">
    <property type="entry name" value="Glycogen synthase"/>
    <property type="match status" value="1"/>
</dbReference>
<dbReference type="FunFam" id="3.40.50.2000:FF:000011">
    <property type="entry name" value="Glycogen synthase"/>
    <property type="match status" value="1"/>
</dbReference>
<dbReference type="Gene3D" id="3.40.50.2000">
    <property type="entry name" value="Glycogen Phosphorylase B"/>
    <property type="match status" value="2"/>
</dbReference>
<dbReference type="HAMAP" id="MF_00484">
    <property type="entry name" value="Glycogen_synth"/>
    <property type="match status" value="1"/>
</dbReference>
<dbReference type="InterPro" id="IPR001296">
    <property type="entry name" value="Glyco_trans_1"/>
</dbReference>
<dbReference type="InterPro" id="IPR011835">
    <property type="entry name" value="GS/SS"/>
</dbReference>
<dbReference type="InterPro" id="IPR013534">
    <property type="entry name" value="Starch_synth_cat_dom"/>
</dbReference>
<dbReference type="NCBIfam" id="TIGR02095">
    <property type="entry name" value="glgA"/>
    <property type="match status" value="1"/>
</dbReference>
<dbReference type="NCBIfam" id="NF001899">
    <property type="entry name" value="PRK00654.1-2"/>
    <property type="match status" value="1"/>
</dbReference>
<dbReference type="PANTHER" id="PTHR45825:SF11">
    <property type="entry name" value="ALPHA AMYLASE DOMAIN-CONTAINING PROTEIN"/>
    <property type="match status" value="1"/>
</dbReference>
<dbReference type="PANTHER" id="PTHR45825">
    <property type="entry name" value="GRANULE-BOUND STARCH SYNTHASE 1, CHLOROPLASTIC/AMYLOPLASTIC"/>
    <property type="match status" value="1"/>
</dbReference>
<dbReference type="Pfam" id="PF08323">
    <property type="entry name" value="Glyco_transf_5"/>
    <property type="match status" value="1"/>
</dbReference>
<dbReference type="Pfam" id="PF00534">
    <property type="entry name" value="Glycos_transf_1"/>
    <property type="match status" value="1"/>
</dbReference>
<dbReference type="SUPFAM" id="SSF53756">
    <property type="entry name" value="UDP-Glycosyltransferase/glycogen phosphorylase"/>
    <property type="match status" value="1"/>
</dbReference>
<feature type="chain" id="PRO_0000188614" description="Glycogen synthase">
    <location>
        <begin position="1"/>
        <end position="479"/>
    </location>
</feature>
<feature type="binding site" evidence="1">
    <location>
        <position position="15"/>
    </location>
    <ligand>
        <name>ADP-alpha-D-glucose</name>
        <dbReference type="ChEBI" id="CHEBI:57498"/>
    </ligand>
</feature>
<organism>
    <name type="scientific">Pectobacterium atrosepticum (strain SCRI 1043 / ATCC BAA-672)</name>
    <name type="common">Erwinia carotovora subsp. atroseptica</name>
    <dbReference type="NCBI Taxonomy" id="218491"/>
    <lineage>
        <taxon>Bacteria</taxon>
        <taxon>Pseudomonadati</taxon>
        <taxon>Pseudomonadota</taxon>
        <taxon>Gammaproteobacteria</taxon>
        <taxon>Enterobacterales</taxon>
        <taxon>Pectobacteriaceae</taxon>
        <taxon>Pectobacterium</taxon>
    </lineage>
</organism>
<protein>
    <recommendedName>
        <fullName evidence="1">Glycogen synthase</fullName>
        <ecNumber evidence="1">2.4.1.21</ecNumber>
    </recommendedName>
    <alternativeName>
        <fullName evidence="1">Starch [bacterial glycogen] synthase</fullName>
    </alternativeName>
</protein>
<evidence type="ECO:0000255" key="1">
    <source>
        <dbReference type="HAMAP-Rule" id="MF_00484"/>
    </source>
</evidence>
<reference key="1">
    <citation type="journal article" date="2004" name="Proc. Natl. Acad. Sci. U.S.A.">
        <title>Genome sequence of the enterobacterial phytopathogen Erwinia carotovora subsp. atroseptica and characterization of virulence factors.</title>
        <authorList>
            <person name="Bell K.S."/>
            <person name="Sebaihia M."/>
            <person name="Pritchard L."/>
            <person name="Holden M.T.G."/>
            <person name="Hyman L.J."/>
            <person name="Holeva M.C."/>
            <person name="Thomson N.R."/>
            <person name="Bentley S.D."/>
            <person name="Churcher L.J.C."/>
            <person name="Mungall K."/>
            <person name="Atkin R."/>
            <person name="Bason N."/>
            <person name="Brooks K."/>
            <person name="Chillingworth T."/>
            <person name="Clark K."/>
            <person name="Doggett J."/>
            <person name="Fraser A."/>
            <person name="Hance Z."/>
            <person name="Hauser H."/>
            <person name="Jagels K."/>
            <person name="Moule S."/>
            <person name="Norbertczak H."/>
            <person name="Ormond D."/>
            <person name="Price C."/>
            <person name="Quail M.A."/>
            <person name="Sanders M."/>
            <person name="Walker D."/>
            <person name="Whitehead S."/>
            <person name="Salmond G.P.C."/>
            <person name="Birch P.R.J."/>
            <person name="Parkhill J."/>
            <person name="Toth I.K."/>
        </authorList>
    </citation>
    <scope>NUCLEOTIDE SEQUENCE [LARGE SCALE GENOMIC DNA]</scope>
    <source>
        <strain>SCRI 1043 / ATCC BAA-672</strain>
    </source>
</reference>
<comment type="function">
    <text evidence="1">Synthesizes alpha-1,4-glucan chains using ADP-glucose.</text>
</comment>
<comment type="catalytic activity">
    <reaction evidence="1">
        <text>[(1-&gt;4)-alpha-D-glucosyl](n) + ADP-alpha-D-glucose = [(1-&gt;4)-alpha-D-glucosyl](n+1) + ADP + H(+)</text>
        <dbReference type="Rhea" id="RHEA:18189"/>
        <dbReference type="Rhea" id="RHEA-COMP:9584"/>
        <dbReference type="Rhea" id="RHEA-COMP:9587"/>
        <dbReference type="ChEBI" id="CHEBI:15378"/>
        <dbReference type="ChEBI" id="CHEBI:15444"/>
        <dbReference type="ChEBI" id="CHEBI:57498"/>
        <dbReference type="ChEBI" id="CHEBI:456216"/>
        <dbReference type="EC" id="2.4.1.21"/>
    </reaction>
</comment>
<comment type="pathway">
    <text evidence="1">Glycan biosynthesis; glycogen biosynthesis.</text>
</comment>
<comment type="similarity">
    <text evidence="1">Belongs to the glycosyltransferase 1 family. Bacterial/plant glycogen synthase subfamily.</text>
</comment>
<keyword id="KW-0320">Glycogen biosynthesis</keyword>
<keyword id="KW-0328">Glycosyltransferase</keyword>
<keyword id="KW-1185">Reference proteome</keyword>
<keyword id="KW-0808">Transferase</keyword>
<gene>
    <name evidence="1" type="primary">glgA</name>
    <name type="ordered locus">ECA4148</name>
</gene>
<sequence length="479" mass="52541">MRVLHVCSELFPLLKTGGLADVAGALPGAQIAAGMDVRVILPAFPDLKKGIANLQVVRELDTFAGHVTLLFGHFNGVGIYLIDVPELYERAGSPYHDPALYAYADNYLRFALLGWMGCEMACGLDHYWRPDIVHAHDWHAGLTCAYLAARNRPAKSVFTVHNLAYQGLFAAGHMANLHLPSDFFQVYGLEFYGQISYLKAGLFYADHITTVSPTYAHEITLPAYGYGMEGLLKTREEEGRLSGILNGVDETIWNPTHDPLLTNHYSREALANKAENKRHLQTAMGLKVDDKAPVFAIVSRLTSQKGLDIALSAIPDLLEQGGQLVVLGAGDADLQEGFLAAAAEYHGQVGVQIGYHEAFSHRIIGGADVIMVPSRFEPCGLTQLYGLKYGTLPLVRRTGGLADTVSDCSLENLADGLASGFVFNDCSVGSLSRAIRRVFVLWSRPTLWRYVQRQAMAMDFGWQVSAQAYGALYQRLHTH</sequence>